<dbReference type="EMBL" id="AF074613">
    <property type="protein sequence ID" value="AAC70144.1"/>
    <property type="molecule type" value="Genomic_DNA"/>
</dbReference>
<dbReference type="EMBL" id="AB011549">
    <property type="protein sequence ID" value="BAA31797.1"/>
    <property type="molecule type" value="Genomic_DNA"/>
</dbReference>
<dbReference type="PIR" id="T00278">
    <property type="entry name" value="T00278"/>
</dbReference>
<dbReference type="RefSeq" id="NP_052647.1">
    <property type="nucleotide sequence ID" value="NC_002128.1"/>
</dbReference>
<dbReference type="RefSeq" id="WP_001005037.1">
    <property type="nucleotide sequence ID" value="NZ_VOAI01000050.1"/>
</dbReference>
<dbReference type="KEGG" id="ece:Z_L7076"/>
<dbReference type="KEGG" id="ecs:pO157p40"/>
<dbReference type="PATRIC" id="fig|386585.9.peg.47"/>
<dbReference type="eggNOG" id="ENOG5031INX">
    <property type="taxonomic scope" value="Bacteria"/>
</dbReference>
<dbReference type="HOGENOM" id="CLU_094896_0_0_6"/>
<dbReference type="OMA" id="RTETIMM"/>
<dbReference type="Proteomes" id="UP000000558">
    <property type="component" value="Plasmid pO157"/>
</dbReference>
<dbReference type="Proteomes" id="UP000002519">
    <property type="component" value="Plasmid pO157"/>
</dbReference>
<feature type="chain" id="PRO_0000262314" description="Uncharacterized protein YubG">
    <location>
        <begin position="1"/>
        <end position="258"/>
    </location>
</feature>
<proteinExistence type="predicted"/>
<organism>
    <name type="scientific">Escherichia coli O157:H7</name>
    <dbReference type="NCBI Taxonomy" id="83334"/>
    <lineage>
        <taxon>Bacteria</taxon>
        <taxon>Pseudomonadati</taxon>
        <taxon>Pseudomonadota</taxon>
        <taxon>Gammaproteobacteria</taxon>
        <taxon>Enterobacterales</taxon>
        <taxon>Enterobacteriaceae</taxon>
        <taxon>Escherichia</taxon>
    </lineage>
</organism>
<gene>
    <name type="ordered locus">L7076</name>
    <name type="ordered locus">ECO57PM40</name>
</gene>
<geneLocation type="plasmid">
    <name>pO157</name>
</geneLocation>
<sequence>MNENTTLNALICRHARNLLLAQGWPEETDVDQRNPKYPGWISIYVLLDAPRLATLLVNRHGGVLPPHLASAIQKLTGTGAELVLSGSQWQSLPVLPADGTQVSFPYAGEWLTEDEIRAVLAAVRDAVRSVSCRVAEDTRRIRAALTTTGQTLLTRQTRRFRLVVKESDHPCWLDEDDENLPVVLDAILNRGARFSAVEMYLVSDCIEHILSSGLACDVLRIPDEPPRRWFDRGVLREVVREARNEIRSMADALAKIRK</sequence>
<accession>O82899</accession>
<accession>Q7BST6</accession>
<protein>
    <recommendedName>
        <fullName>Uncharacterized protein YubG</fullName>
    </recommendedName>
</protein>
<reference key="1">
    <citation type="journal article" date="1998" name="Nucleic Acids Res.">
        <title>The complete DNA sequence and analysis of the large virulence plasmid of Escherichia coli O157:H7.</title>
        <authorList>
            <person name="Burland V."/>
            <person name="Shao Y."/>
            <person name="Perna N.T."/>
            <person name="Plunkett G. III"/>
            <person name="Sofia H.J."/>
            <person name="Blattner F.R."/>
        </authorList>
    </citation>
    <scope>NUCLEOTIDE SEQUENCE [LARGE SCALE GENOMIC DNA]</scope>
    <source>
        <strain>O157:H7 / EDL933 / ATCC 700927 / EHEC</strain>
    </source>
</reference>
<reference key="2">
    <citation type="journal article" date="1998" name="DNA Res.">
        <title>Complete nucleotide sequences of 93-kb and 3.3-kb plasmids of an enterohemorrhagic Escherichia coli O157:H7 derived from Sakai outbreak.</title>
        <authorList>
            <person name="Makino K."/>
            <person name="Ishii K."/>
            <person name="Yasunaga T."/>
            <person name="Hattori M."/>
            <person name="Yokoyama K."/>
            <person name="Yatsudo H.C."/>
            <person name="Kubota Y."/>
            <person name="Yamaichi Y."/>
            <person name="Iida T."/>
            <person name="Yamamoto K."/>
            <person name="Honda T."/>
            <person name="Han C.G."/>
            <person name="Ohtsubo A."/>
            <person name="Kasamatsu M."/>
            <person name="Hayashi T."/>
            <person name="Kuhara S."/>
            <person name="Shinagawa H."/>
        </authorList>
    </citation>
    <scope>NUCLEOTIDE SEQUENCE [LARGE SCALE GENOMIC DNA]</scope>
    <source>
        <strain>O157:H7 / Sakai / RIMD 0509952 / EHEC</strain>
    </source>
</reference>
<name>YUBG_ECO57</name>
<keyword id="KW-0614">Plasmid</keyword>
<keyword id="KW-1185">Reference proteome</keyword>